<protein>
    <recommendedName>
        <fullName>Homeobox protein Hox-B9</fullName>
    </recommendedName>
    <alternativeName>
        <fullName>Homeobox protein Hox-2.5</fullName>
    </alternativeName>
    <alternativeName>
        <fullName>Homeobox protein Hox-2E</fullName>
    </alternativeName>
</protein>
<proteinExistence type="evidence at protein level"/>
<keyword id="KW-0217">Developmental protein</keyword>
<keyword id="KW-0238">DNA-binding</keyword>
<keyword id="KW-0371">Homeobox</keyword>
<keyword id="KW-1017">Isopeptide bond</keyword>
<keyword id="KW-0539">Nucleus</keyword>
<keyword id="KW-0597">Phosphoprotein</keyword>
<keyword id="KW-1267">Proteomics identification</keyword>
<keyword id="KW-1185">Reference proteome</keyword>
<keyword id="KW-0804">Transcription</keyword>
<keyword id="KW-0805">Transcription regulation</keyword>
<keyword id="KW-0832">Ubl conjugation</keyword>
<dbReference type="EMBL" id="AY014296">
    <property type="protein sequence ID" value="AAG42144.1"/>
    <property type="molecule type" value="Genomic_DNA"/>
</dbReference>
<dbReference type="EMBL" id="AY014295">
    <property type="protein sequence ID" value="AAG42144.1"/>
    <property type="status" value="JOINED"/>
    <property type="molecule type" value="Genomic_DNA"/>
</dbReference>
<dbReference type="EMBL" id="AK315480">
    <property type="protein sequence ID" value="BAG37864.1"/>
    <property type="molecule type" value="mRNA"/>
</dbReference>
<dbReference type="EMBL" id="CH471109">
    <property type="protein sequence ID" value="EAW94721.1"/>
    <property type="molecule type" value="Genomic_DNA"/>
</dbReference>
<dbReference type="EMBL" id="BC015565">
    <property type="protein sequence ID" value="AAH15565.1"/>
    <property type="molecule type" value="mRNA"/>
</dbReference>
<dbReference type="EMBL" id="X16172">
    <property type="protein sequence ID" value="CAA34294.1"/>
    <property type="molecule type" value="Genomic_DNA"/>
</dbReference>
<dbReference type="CCDS" id="CCDS11534.1"/>
<dbReference type="PIR" id="A37042">
    <property type="entry name" value="A37042"/>
</dbReference>
<dbReference type="RefSeq" id="NP_076922.1">
    <property type="nucleotide sequence ID" value="NM_024017.5"/>
</dbReference>
<dbReference type="SMR" id="P17482"/>
<dbReference type="BioGRID" id="109459">
    <property type="interactions" value="122"/>
</dbReference>
<dbReference type="FunCoup" id="P17482">
    <property type="interactions" value="1752"/>
</dbReference>
<dbReference type="IntAct" id="P17482">
    <property type="interactions" value="102"/>
</dbReference>
<dbReference type="MINT" id="P17482"/>
<dbReference type="STRING" id="9606.ENSP00000309439"/>
<dbReference type="iPTMnet" id="P17482"/>
<dbReference type="PhosphoSitePlus" id="P17482"/>
<dbReference type="BioMuta" id="HOXB9"/>
<dbReference type="DMDM" id="20141507"/>
<dbReference type="jPOST" id="P17482"/>
<dbReference type="MassIVE" id="P17482"/>
<dbReference type="PaxDb" id="9606-ENSP00000309439"/>
<dbReference type="PeptideAtlas" id="P17482"/>
<dbReference type="ProteomicsDB" id="53476"/>
<dbReference type="Pumba" id="P17482"/>
<dbReference type="Antibodypedia" id="17861">
    <property type="antibodies" value="325 antibodies from 33 providers"/>
</dbReference>
<dbReference type="DNASU" id="3219"/>
<dbReference type="Ensembl" id="ENST00000311177.7">
    <property type="protein sequence ID" value="ENSP00000309439.5"/>
    <property type="gene ID" value="ENSG00000170689.10"/>
</dbReference>
<dbReference type="GeneID" id="3219"/>
<dbReference type="KEGG" id="hsa:3219"/>
<dbReference type="MANE-Select" id="ENST00000311177.7">
    <property type="protein sequence ID" value="ENSP00000309439.5"/>
    <property type="RefSeq nucleotide sequence ID" value="NM_024017.5"/>
    <property type="RefSeq protein sequence ID" value="NP_076922.1"/>
</dbReference>
<dbReference type="UCSC" id="uc002inx.4">
    <property type="organism name" value="human"/>
</dbReference>
<dbReference type="AGR" id="HGNC:5120"/>
<dbReference type="CTD" id="3219"/>
<dbReference type="DisGeNET" id="3219"/>
<dbReference type="GeneCards" id="HOXB9"/>
<dbReference type="HGNC" id="HGNC:5120">
    <property type="gene designation" value="HOXB9"/>
</dbReference>
<dbReference type="HPA" id="ENSG00000170689">
    <property type="expression patterns" value="Tissue enhanced (epididymis, intestine, kidney)"/>
</dbReference>
<dbReference type="MIM" id="142964">
    <property type="type" value="gene"/>
</dbReference>
<dbReference type="neXtProt" id="NX_P17482"/>
<dbReference type="OpenTargets" id="ENSG00000170689"/>
<dbReference type="PharmGKB" id="PA29396"/>
<dbReference type="VEuPathDB" id="HostDB:ENSG00000170689"/>
<dbReference type="eggNOG" id="KOG0487">
    <property type="taxonomic scope" value="Eukaryota"/>
</dbReference>
<dbReference type="GeneTree" id="ENSGT00940000161386"/>
<dbReference type="HOGENOM" id="CLU_071854_1_0_1"/>
<dbReference type="InParanoid" id="P17482"/>
<dbReference type="OMA" id="EDSKDIC"/>
<dbReference type="OrthoDB" id="6159439at2759"/>
<dbReference type="PAN-GO" id="P17482">
    <property type="GO annotations" value="7 GO annotations based on evolutionary models"/>
</dbReference>
<dbReference type="PhylomeDB" id="P17482"/>
<dbReference type="TreeFam" id="TF317819"/>
<dbReference type="PathwayCommons" id="P17482"/>
<dbReference type="SignaLink" id="P17482"/>
<dbReference type="SIGNOR" id="P17482"/>
<dbReference type="BioGRID-ORCS" id="3219">
    <property type="hits" value="28 hits in 1180 CRISPR screens"/>
</dbReference>
<dbReference type="ChiTaRS" id="HOXB9">
    <property type="organism name" value="human"/>
</dbReference>
<dbReference type="GeneWiki" id="HOXB9"/>
<dbReference type="GenomeRNAi" id="3219"/>
<dbReference type="Pharos" id="P17482">
    <property type="development level" value="Tbio"/>
</dbReference>
<dbReference type="PRO" id="PR:P17482"/>
<dbReference type="Proteomes" id="UP000005640">
    <property type="component" value="Chromosome 17"/>
</dbReference>
<dbReference type="RNAct" id="P17482">
    <property type="molecule type" value="protein"/>
</dbReference>
<dbReference type="Bgee" id="ENSG00000170689">
    <property type="expression patterns" value="Expressed in mucosa of transverse colon and 76 other cell types or tissues"/>
</dbReference>
<dbReference type="GO" id="GO:0000785">
    <property type="term" value="C:chromatin"/>
    <property type="evidence" value="ECO:0000247"/>
    <property type="project" value="NTNU_SB"/>
</dbReference>
<dbReference type="GO" id="GO:0005654">
    <property type="term" value="C:nucleoplasm"/>
    <property type="evidence" value="ECO:0000314"/>
    <property type="project" value="HPA"/>
</dbReference>
<dbReference type="GO" id="GO:0005634">
    <property type="term" value="C:nucleus"/>
    <property type="evidence" value="ECO:0000318"/>
    <property type="project" value="GO_Central"/>
</dbReference>
<dbReference type="GO" id="GO:0090575">
    <property type="term" value="C:RNA polymerase II transcription regulator complex"/>
    <property type="evidence" value="ECO:0007669"/>
    <property type="project" value="Ensembl"/>
</dbReference>
<dbReference type="GO" id="GO:0003700">
    <property type="term" value="F:DNA-binding transcription factor activity"/>
    <property type="evidence" value="ECO:0000318"/>
    <property type="project" value="GO_Central"/>
</dbReference>
<dbReference type="GO" id="GO:0000981">
    <property type="term" value="F:DNA-binding transcription factor activity, RNA polymerase II-specific"/>
    <property type="evidence" value="ECO:0000247"/>
    <property type="project" value="NTNU_SB"/>
</dbReference>
<dbReference type="GO" id="GO:0000978">
    <property type="term" value="F:RNA polymerase II cis-regulatory region sequence-specific DNA binding"/>
    <property type="evidence" value="ECO:0000318"/>
    <property type="project" value="GO_Central"/>
</dbReference>
<dbReference type="GO" id="GO:1990837">
    <property type="term" value="F:sequence-specific double-stranded DNA binding"/>
    <property type="evidence" value="ECO:0000314"/>
    <property type="project" value="ARUK-UCL"/>
</dbReference>
<dbReference type="GO" id="GO:0009952">
    <property type="term" value="P:anterior/posterior pattern specification"/>
    <property type="evidence" value="ECO:0000318"/>
    <property type="project" value="GO_Central"/>
</dbReference>
<dbReference type="GO" id="GO:0060326">
    <property type="term" value="P:cell chemotaxis"/>
    <property type="evidence" value="ECO:0000314"/>
    <property type="project" value="UniProtKB"/>
</dbReference>
<dbReference type="GO" id="GO:0006351">
    <property type="term" value="P:DNA-templated transcription"/>
    <property type="evidence" value="ECO:0007669"/>
    <property type="project" value="InterPro"/>
</dbReference>
<dbReference type="GO" id="GO:0048704">
    <property type="term" value="P:embryonic skeletal system morphogenesis"/>
    <property type="evidence" value="ECO:0000318"/>
    <property type="project" value="GO_Central"/>
</dbReference>
<dbReference type="GO" id="GO:0030879">
    <property type="term" value="P:mammary gland development"/>
    <property type="evidence" value="ECO:0007669"/>
    <property type="project" value="Ensembl"/>
</dbReference>
<dbReference type="GO" id="GO:0045944">
    <property type="term" value="P:positive regulation of transcription by RNA polymerase II"/>
    <property type="evidence" value="ECO:0007669"/>
    <property type="project" value="Ensembl"/>
</dbReference>
<dbReference type="GO" id="GO:0009954">
    <property type="term" value="P:proximal/distal pattern formation"/>
    <property type="evidence" value="ECO:0000318"/>
    <property type="project" value="GO_Central"/>
</dbReference>
<dbReference type="GO" id="GO:0006357">
    <property type="term" value="P:regulation of transcription by RNA polymerase II"/>
    <property type="evidence" value="ECO:0000318"/>
    <property type="project" value="GO_Central"/>
</dbReference>
<dbReference type="CDD" id="cd00086">
    <property type="entry name" value="homeodomain"/>
    <property type="match status" value="1"/>
</dbReference>
<dbReference type="FunFam" id="1.10.10.60:FF:000018">
    <property type="entry name" value="Homeobox A10"/>
    <property type="match status" value="1"/>
</dbReference>
<dbReference type="Gene3D" id="1.10.10.60">
    <property type="entry name" value="Homeodomain-like"/>
    <property type="match status" value="1"/>
</dbReference>
<dbReference type="InterPro" id="IPR050803">
    <property type="entry name" value="Abd-B_homeobox_TF"/>
</dbReference>
<dbReference type="InterPro" id="IPR001356">
    <property type="entry name" value="HD"/>
</dbReference>
<dbReference type="InterPro" id="IPR020479">
    <property type="entry name" value="HD_metazoa"/>
</dbReference>
<dbReference type="InterPro" id="IPR017970">
    <property type="entry name" value="Homeobox_CS"/>
</dbReference>
<dbReference type="InterPro" id="IPR009057">
    <property type="entry name" value="Homeodomain-like_sf"/>
</dbReference>
<dbReference type="InterPro" id="IPR006711">
    <property type="entry name" value="Hox9_activation_N"/>
</dbReference>
<dbReference type="InterPro" id="IPR017112">
    <property type="entry name" value="HXA9/HXB9/HXC9"/>
</dbReference>
<dbReference type="PANTHER" id="PTHR45970">
    <property type="entry name" value="AGAP004664-PA"/>
    <property type="match status" value="1"/>
</dbReference>
<dbReference type="PANTHER" id="PTHR45970:SF5">
    <property type="entry name" value="HOMEOBOX PROTEIN HOX-B9"/>
    <property type="match status" value="1"/>
</dbReference>
<dbReference type="Pfam" id="PF00046">
    <property type="entry name" value="Homeodomain"/>
    <property type="match status" value="1"/>
</dbReference>
<dbReference type="Pfam" id="PF04617">
    <property type="entry name" value="Hox9_act"/>
    <property type="match status" value="1"/>
</dbReference>
<dbReference type="PIRSF" id="PIRSF037109">
    <property type="entry name" value="Homeobox_Hox9"/>
    <property type="match status" value="1"/>
</dbReference>
<dbReference type="PRINTS" id="PR00024">
    <property type="entry name" value="HOMEOBOX"/>
</dbReference>
<dbReference type="SMART" id="SM00389">
    <property type="entry name" value="HOX"/>
    <property type="match status" value="1"/>
</dbReference>
<dbReference type="SUPFAM" id="SSF46689">
    <property type="entry name" value="Homeodomain-like"/>
    <property type="match status" value="1"/>
</dbReference>
<dbReference type="PROSITE" id="PS00027">
    <property type="entry name" value="HOMEOBOX_1"/>
    <property type="match status" value="1"/>
</dbReference>
<dbReference type="PROSITE" id="PS50071">
    <property type="entry name" value="HOMEOBOX_2"/>
    <property type="match status" value="1"/>
</dbReference>
<evidence type="ECO:0000255" key="1">
    <source>
        <dbReference type="PROSITE-ProRule" id="PRU00108"/>
    </source>
</evidence>
<evidence type="ECO:0000256" key="2">
    <source>
        <dbReference type="SAM" id="MobiDB-lite"/>
    </source>
</evidence>
<evidence type="ECO:0000305" key="3"/>
<evidence type="ECO:0007744" key="4">
    <source>
    </source>
</evidence>
<evidence type="ECO:0007744" key="5">
    <source>
    </source>
</evidence>
<feature type="chain" id="PRO_0000200155" description="Homeobox protein Hox-B9">
    <location>
        <begin position="1"/>
        <end position="250"/>
    </location>
</feature>
<feature type="DNA-binding region" description="Homeobox" evidence="1">
    <location>
        <begin position="185"/>
        <end position="244"/>
    </location>
</feature>
<feature type="region of interest" description="Disordered" evidence="2">
    <location>
        <begin position="21"/>
        <end position="47"/>
    </location>
</feature>
<feature type="region of interest" description="Disordered" evidence="2">
    <location>
        <begin position="149"/>
        <end position="182"/>
    </location>
</feature>
<feature type="compositionally biased region" description="Basic and acidic residues" evidence="2">
    <location>
        <begin position="159"/>
        <end position="171"/>
    </location>
</feature>
<feature type="modified residue" description="Phosphothreonine" evidence="4">
    <location>
        <position position="133"/>
    </location>
</feature>
<feature type="cross-link" description="Glycyl lysine isopeptide (Lys-Gly) (interchain with G-Cter in SUMO2)" evidence="5">
    <location>
        <position position="117"/>
    </location>
</feature>
<feature type="sequence conflict" description="In Ref. 5; CAA34294." evidence="3" ref="5">
    <original>T</original>
    <variation>A</variation>
    <location>
        <position position="173"/>
    </location>
</feature>
<sequence>MSISGTLSSYYVDSIISHESEDAPPAKFPSGQYASSRQPGHAEHLEFPSCSFQPKAPVFGASWAPLSPHASGSLPSVYHPYIQPQGVPPAESRYLRTWLEPAPRGEAAPGQGQAAVKAEPLLGAPGELLKQGTPEYSLETSAGREAVLSNQRPGYGDNKICEGSEDKERPDQTNPSANWLHARSSRKKRCPYTKYQTLELEKEFLFNMYLTRDRRHEVARLLNLSERQVKIWFQNRRMKMKKMNKEQGKE</sequence>
<name>HXB9_HUMAN</name>
<reference key="1">
    <citation type="journal article" date="2002" name="Teratology">
        <title>Complete mutation analysis panel of the 39 human HOX genes.</title>
        <authorList>
            <person name="Kosaki K."/>
            <person name="Kosaki R."/>
            <person name="Suzuki T."/>
            <person name="Yoshihashi H."/>
            <person name="Takahashi T."/>
            <person name="Sasaki K."/>
            <person name="Tomita M."/>
            <person name="McGinnis W."/>
            <person name="Matsuo N."/>
        </authorList>
    </citation>
    <scope>NUCLEOTIDE SEQUENCE [GENOMIC DNA]</scope>
</reference>
<reference key="2">
    <citation type="journal article" date="2004" name="Nat. Genet.">
        <title>Complete sequencing and characterization of 21,243 full-length human cDNAs.</title>
        <authorList>
            <person name="Ota T."/>
            <person name="Suzuki Y."/>
            <person name="Nishikawa T."/>
            <person name="Otsuki T."/>
            <person name="Sugiyama T."/>
            <person name="Irie R."/>
            <person name="Wakamatsu A."/>
            <person name="Hayashi K."/>
            <person name="Sato H."/>
            <person name="Nagai K."/>
            <person name="Kimura K."/>
            <person name="Makita H."/>
            <person name="Sekine M."/>
            <person name="Obayashi M."/>
            <person name="Nishi T."/>
            <person name="Shibahara T."/>
            <person name="Tanaka T."/>
            <person name="Ishii S."/>
            <person name="Yamamoto J."/>
            <person name="Saito K."/>
            <person name="Kawai Y."/>
            <person name="Isono Y."/>
            <person name="Nakamura Y."/>
            <person name="Nagahari K."/>
            <person name="Murakami K."/>
            <person name="Yasuda T."/>
            <person name="Iwayanagi T."/>
            <person name="Wagatsuma M."/>
            <person name="Shiratori A."/>
            <person name="Sudo H."/>
            <person name="Hosoiri T."/>
            <person name="Kaku Y."/>
            <person name="Kodaira H."/>
            <person name="Kondo H."/>
            <person name="Sugawara M."/>
            <person name="Takahashi M."/>
            <person name="Kanda K."/>
            <person name="Yokoi T."/>
            <person name="Furuya T."/>
            <person name="Kikkawa E."/>
            <person name="Omura Y."/>
            <person name="Abe K."/>
            <person name="Kamihara K."/>
            <person name="Katsuta N."/>
            <person name="Sato K."/>
            <person name="Tanikawa M."/>
            <person name="Yamazaki M."/>
            <person name="Ninomiya K."/>
            <person name="Ishibashi T."/>
            <person name="Yamashita H."/>
            <person name="Murakawa K."/>
            <person name="Fujimori K."/>
            <person name="Tanai H."/>
            <person name="Kimata M."/>
            <person name="Watanabe M."/>
            <person name="Hiraoka S."/>
            <person name="Chiba Y."/>
            <person name="Ishida S."/>
            <person name="Ono Y."/>
            <person name="Takiguchi S."/>
            <person name="Watanabe S."/>
            <person name="Yosida M."/>
            <person name="Hotuta T."/>
            <person name="Kusano J."/>
            <person name="Kanehori K."/>
            <person name="Takahashi-Fujii A."/>
            <person name="Hara H."/>
            <person name="Tanase T.-O."/>
            <person name="Nomura Y."/>
            <person name="Togiya S."/>
            <person name="Komai F."/>
            <person name="Hara R."/>
            <person name="Takeuchi K."/>
            <person name="Arita M."/>
            <person name="Imose N."/>
            <person name="Musashino K."/>
            <person name="Yuuki H."/>
            <person name="Oshima A."/>
            <person name="Sasaki N."/>
            <person name="Aotsuka S."/>
            <person name="Yoshikawa Y."/>
            <person name="Matsunawa H."/>
            <person name="Ichihara T."/>
            <person name="Shiohata N."/>
            <person name="Sano S."/>
            <person name="Moriya S."/>
            <person name="Momiyama H."/>
            <person name="Satoh N."/>
            <person name="Takami S."/>
            <person name="Terashima Y."/>
            <person name="Suzuki O."/>
            <person name="Nakagawa S."/>
            <person name="Senoh A."/>
            <person name="Mizoguchi H."/>
            <person name="Goto Y."/>
            <person name="Shimizu F."/>
            <person name="Wakebe H."/>
            <person name="Hishigaki H."/>
            <person name="Watanabe T."/>
            <person name="Sugiyama A."/>
            <person name="Takemoto M."/>
            <person name="Kawakami B."/>
            <person name="Yamazaki M."/>
            <person name="Watanabe K."/>
            <person name="Kumagai A."/>
            <person name="Itakura S."/>
            <person name="Fukuzumi Y."/>
            <person name="Fujimori Y."/>
            <person name="Komiyama M."/>
            <person name="Tashiro H."/>
            <person name="Tanigami A."/>
            <person name="Fujiwara T."/>
            <person name="Ono T."/>
            <person name="Yamada K."/>
            <person name="Fujii Y."/>
            <person name="Ozaki K."/>
            <person name="Hirao M."/>
            <person name="Ohmori Y."/>
            <person name="Kawabata A."/>
            <person name="Hikiji T."/>
            <person name="Kobatake N."/>
            <person name="Inagaki H."/>
            <person name="Ikema Y."/>
            <person name="Okamoto S."/>
            <person name="Okitani R."/>
            <person name="Kawakami T."/>
            <person name="Noguchi S."/>
            <person name="Itoh T."/>
            <person name="Shigeta K."/>
            <person name="Senba T."/>
            <person name="Matsumura K."/>
            <person name="Nakajima Y."/>
            <person name="Mizuno T."/>
            <person name="Morinaga M."/>
            <person name="Sasaki M."/>
            <person name="Togashi T."/>
            <person name="Oyama M."/>
            <person name="Hata H."/>
            <person name="Watanabe M."/>
            <person name="Komatsu T."/>
            <person name="Mizushima-Sugano J."/>
            <person name="Satoh T."/>
            <person name="Shirai Y."/>
            <person name="Takahashi Y."/>
            <person name="Nakagawa K."/>
            <person name="Okumura K."/>
            <person name="Nagase T."/>
            <person name="Nomura N."/>
            <person name="Kikuchi H."/>
            <person name="Masuho Y."/>
            <person name="Yamashita R."/>
            <person name="Nakai K."/>
            <person name="Yada T."/>
            <person name="Nakamura Y."/>
            <person name="Ohara O."/>
            <person name="Isogai T."/>
            <person name="Sugano S."/>
        </authorList>
    </citation>
    <scope>NUCLEOTIDE SEQUENCE [LARGE SCALE MRNA]</scope>
</reference>
<reference key="3">
    <citation type="submission" date="2005-09" db="EMBL/GenBank/DDBJ databases">
        <authorList>
            <person name="Mural R.J."/>
            <person name="Istrail S."/>
            <person name="Sutton G.G."/>
            <person name="Florea L."/>
            <person name="Halpern A.L."/>
            <person name="Mobarry C.M."/>
            <person name="Lippert R."/>
            <person name="Walenz B."/>
            <person name="Shatkay H."/>
            <person name="Dew I."/>
            <person name="Miller J.R."/>
            <person name="Flanigan M.J."/>
            <person name="Edwards N.J."/>
            <person name="Bolanos R."/>
            <person name="Fasulo D."/>
            <person name="Halldorsson B.V."/>
            <person name="Hannenhalli S."/>
            <person name="Turner R."/>
            <person name="Yooseph S."/>
            <person name="Lu F."/>
            <person name="Nusskern D.R."/>
            <person name="Shue B.C."/>
            <person name="Zheng X.H."/>
            <person name="Zhong F."/>
            <person name="Delcher A.L."/>
            <person name="Huson D.H."/>
            <person name="Kravitz S.A."/>
            <person name="Mouchard L."/>
            <person name="Reinert K."/>
            <person name="Remington K.A."/>
            <person name="Clark A.G."/>
            <person name="Waterman M.S."/>
            <person name="Eichler E.E."/>
            <person name="Adams M.D."/>
            <person name="Hunkapiller M.W."/>
            <person name="Myers E.W."/>
            <person name="Venter J.C."/>
        </authorList>
    </citation>
    <scope>NUCLEOTIDE SEQUENCE [LARGE SCALE GENOMIC DNA]</scope>
</reference>
<reference key="4">
    <citation type="journal article" date="2004" name="Genome Res.">
        <title>The status, quality, and expansion of the NIH full-length cDNA project: the Mammalian Gene Collection (MGC).</title>
        <authorList>
            <consortium name="The MGC Project Team"/>
        </authorList>
    </citation>
    <scope>NUCLEOTIDE SEQUENCE [LARGE SCALE MRNA]</scope>
    <source>
        <tissue>Muscle</tissue>
    </source>
</reference>
<reference key="5">
    <citation type="journal article" date="1989" name="Differentiation">
        <title>Differential expression of human HOX-2 genes along the anterior-posterior axis in embryonic central nervous system.</title>
        <authorList>
            <person name="Giampaolo A."/>
            <person name="Acampora D."/>
            <person name="Zappavigna V."/>
            <person name="Pannese M."/>
            <person name="D'Esposito M."/>
            <person name="Care A."/>
            <person name="Faiella A."/>
            <person name="Stornaiuolo A."/>
            <person name="Russo G."/>
            <person name="Simeone A."/>
            <person name="Boncinelli E."/>
            <person name="Peschle C."/>
        </authorList>
    </citation>
    <scope>NUCLEOTIDE SEQUENCE [GENOMIC DNA] OF 173-250</scope>
    <source>
        <tissue>Placenta</tissue>
    </source>
</reference>
<reference key="6">
    <citation type="journal article" date="1989" name="Genome">
        <title>Organization of human class I homeobox genes.</title>
        <authorList>
            <person name="Boncinelli E."/>
            <person name="Acampora D."/>
            <person name="Pannese M."/>
            <person name="D'Esposito M."/>
            <person name="Somma R."/>
            <person name="Gaudino G."/>
            <person name="Stornaiuolo A."/>
            <person name="Cafiero M."/>
            <person name="Faiella A."/>
            <person name="Simeone A."/>
        </authorList>
    </citation>
    <scope>NUCLEOTIDE SEQUENCE [GENOMIC DNA] OF 185-250</scope>
</reference>
<reference key="7">
    <citation type="journal article" date="2013" name="J. Proteome Res.">
        <title>Toward a comprehensive characterization of a human cancer cell phosphoproteome.</title>
        <authorList>
            <person name="Zhou H."/>
            <person name="Di Palma S."/>
            <person name="Preisinger C."/>
            <person name="Peng M."/>
            <person name="Polat A.N."/>
            <person name="Heck A.J."/>
            <person name="Mohammed S."/>
        </authorList>
    </citation>
    <scope>PHOSPHORYLATION [LARGE SCALE ANALYSIS] AT THR-133</scope>
    <scope>IDENTIFICATION BY MASS SPECTROMETRY [LARGE SCALE ANALYSIS]</scope>
    <source>
        <tissue>Erythroleukemia</tissue>
    </source>
</reference>
<reference key="8">
    <citation type="journal article" date="2017" name="Nat. Struct. Mol. Biol.">
        <title>Site-specific mapping of the human SUMO proteome reveals co-modification with phosphorylation.</title>
        <authorList>
            <person name="Hendriks I.A."/>
            <person name="Lyon D."/>
            <person name="Young C."/>
            <person name="Jensen L.J."/>
            <person name="Vertegaal A.C."/>
            <person name="Nielsen M.L."/>
        </authorList>
    </citation>
    <scope>SUMOYLATION [LARGE SCALE ANALYSIS] AT LYS-117</scope>
    <scope>IDENTIFICATION BY MASS SPECTROMETRY [LARGE SCALE ANALYSIS]</scope>
</reference>
<accession>P17482</accession>
<accession>B2RDB7</accession>
<accession>Q9H1I1</accession>
<gene>
    <name type="primary">HOXB9</name>
    <name type="synonym">HOX2E</name>
</gene>
<comment type="function">
    <text>Sequence-specific transcription factor which is part of a developmental regulatory system that provides cells with specific positional identities on the anterior-posterior axis.</text>
</comment>
<comment type="interaction">
    <interactant intactId="EBI-745290">
        <id>P17482</id>
    </interactant>
    <interactant intactId="EBI-953896">
        <id>Q9NP55</id>
        <label>BPIFA1</label>
    </interactant>
    <organismsDiffer>false</organismsDiffer>
    <experiments>3</experiments>
</comment>
<comment type="interaction">
    <interactant intactId="EBI-745290">
        <id>P17482</id>
    </interactant>
    <interactant intactId="EBI-739580">
        <id>Q13137</id>
        <label>CALCOCO2</label>
    </interactant>
    <organismsDiffer>false</organismsDiffer>
    <experiments>3</experiments>
</comment>
<comment type="interaction">
    <interactant intactId="EBI-745290">
        <id>P17482</id>
    </interactant>
    <interactant intactId="EBI-3866279">
        <id>Q9BWT7</id>
        <label>CARD10</label>
    </interactant>
    <organismsDiffer>false</organismsDiffer>
    <experiments>3</experiments>
</comment>
<comment type="interaction">
    <interactant intactId="EBI-745290">
        <id>P17482</id>
    </interactant>
    <interactant intactId="EBI-3867333">
        <id>A8MQ03</id>
        <label>CYSRT1</label>
    </interactant>
    <organismsDiffer>false</organismsDiffer>
    <experiments>3</experiments>
</comment>
<comment type="interaction">
    <interactant intactId="EBI-745290">
        <id>P17482</id>
    </interactant>
    <interactant intactId="EBI-371922">
        <id>Q96B26</id>
        <label>EXOSC8</label>
    </interactant>
    <organismsDiffer>false</organismsDiffer>
    <experiments>3</experiments>
</comment>
<comment type="interaction">
    <interactant intactId="EBI-745290">
        <id>P17482</id>
    </interactant>
    <interactant intactId="EBI-12193763">
        <id>A1KXE4-2</id>
        <label>FAM168B</label>
    </interactant>
    <organismsDiffer>false</organismsDiffer>
    <experiments>3</experiments>
</comment>
<comment type="interaction">
    <interactant intactId="EBI-745290">
        <id>P17482</id>
    </interactant>
    <interactant intactId="EBI-750641">
        <id>Q5TD97</id>
        <label>FHL5</label>
    </interactant>
    <organismsDiffer>false</organismsDiffer>
    <experiments>3</experiments>
</comment>
<comment type="interaction">
    <interactant intactId="EBI-745290">
        <id>P17482</id>
    </interactant>
    <interactant intactId="EBI-618309">
        <id>Q08379</id>
        <label>GOLGA2</label>
    </interactant>
    <organismsDiffer>false</organismsDiffer>
    <experiments>3</experiments>
</comment>
<comment type="interaction">
    <interactant intactId="EBI-745290">
        <id>P17482</id>
    </interactant>
    <interactant intactId="EBI-5916454">
        <id>A6NEM1</id>
        <label>GOLGA6L9</label>
    </interactant>
    <organismsDiffer>false</organismsDiffer>
    <experiments>3</experiments>
</comment>
<comment type="interaction">
    <interactant intactId="EBI-745290">
        <id>P17482</id>
    </interactant>
    <interactant intactId="EBI-740785">
        <id>P49639</id>
        <label>HOXA1</label>
    </interactant>
    <organismsDiffer>false</organismsDiffer>
    <experiments>3</experiments>
</comment>
<comment type="interaction">
    <interactant intactId="EBI-745290">
        <id>P17482</id>
    </interactant>
    <interactant intactId="EBI-739395">
        <id>Q16082</id>
        <label>HSPB2</label>
    </interactant>
    <organismsDiffer>false</organismsDiffer>
    <experiments>3</experiments>
</comment>
<comment type="interaction">
    <interactant intactId="EBI-745290">
        <id>P17482</id>
    </interactant>
    <interactant intactId="EBI-3044087">
        <id>Q7Z3Y8</id>
        <label>KRT27</label>
    </interactant>
    <organismsDiffer>false</organismsDiffer>
    <experiments>3</experiments>
</comment>
<comment type="interaction">
    <interactant intactId="EBI-745290">
        <id>P17482</id>
    </interactant>
    <interactant intactId="EBI-1047093">
        <id>O76011</id>
        <label>KRT34</label>
    </interactant>
    <organismsDiffer>false</organismsDiffer>
    <experiments>3</experiments>
</comment>
<comment type="interaction">
    <interactant intactId="EBI-745290">
        <id>P17482</id>
    </interactant>
    <interactant intactId="EBI-10171697">
        <id>Q6A162</id>
        <label>KRT40</label>
    </interactant>
    <organismsDiffer>false</organismsDiffer>
    <experiments>3</experiments>
</comment>
<comment type="interaction">
    <interactant intactId="EBI-745290">
        <id>P17482</id>
    </interactant>
    <interactant intactId="EBI-11959885">
        <id>Q07627</id>
        <label>KRTAP1-1</label>
    </interactant>
    <organismsDiffer>false</organismsDiffer>
    <experiments>3</experiments>
</comment>
<comment type="interaction">
    <interactant intactId="EBI-745290">
        <id>P17482</id>
    </interactant>
    <interactant intactId="EBI-11749135">
        <id>Q8IUG1</id>
        <label>KRTAP1-3</label>
    </interactant>
    <organismsDiffer>false</organismsDiffer>
    <experiments>3</experiments>
</comment>
<comment type="interaction">
    <interactant intactId="EBI-745290">
        <id>P17482</id>
    </interactant>
    <interactant intactId="EBI-11741292">
        <id>Q9BYS1</id>
        <label>KRTAP1-5</label>
    </interactant>
    <organismsDiffer>false</organismsDiffer>
    <experiments>3</experiments>
</comment>
<comment type="interaction">
    <interactant intactId="EBI-745290">
        <id>P17482</id>
    </interactant>
    <interactant intactId="EBI-10171774">
        <id>P60410</id>
        <label>KRTAP10-8</label>
    </interactant>
    <organismsDiffer>false</organismsDiffer>
    <experiments>3</experiments>
</comment>
<comment type="interaction">
    <interactant intactId="EBI-745290">
        <id>P17482</id>
    </interactant>
    <interactant intactId="EBI-10172052">
        <id>P60411</id>
        <label>KRTAP10-9</label>
    </interactant>
    <organismsDiffer>false</organismsDiffer>
    <experiments>3</experiments>
</comment>
<comment type="interaction">
    <interactant intactId="EBI-745290">
        <id>P17482</id>
    </interactant>
    <interactant intactId="EBI-10176379">
        <id>P59991</id>
        <label>KRTAP12-2</label>
    </interactant>
    <organismsDiffer>false</organismsDiffer>
    <experiments>3</experiments>
</comment>
<comment type="interaction">
    <interactant intactId="EBI-745290">
        <id>P17482</id>
    </interactant>
    <interactant intactId="EBI-11988175">
        <id>Q9BYP8</id>
        <label>KRTAP17-1</label>
    </interactant>
    <organismsDiffer>false</organismsDiffer>
    <experiments>3</experiments>
</comment>
<comment type="interaction">
    <interactant intactId="EBI-745290">
        <id>P17482</id>
    </interactant>
    <interactant intactId="EBI-1048945">
        <id>Q3LI72</id>
        <label>KRTAP19-5</label>
    </interactant>
    <organismsDiffer>false</organismsDiffer>
    <experiments>3</experiments>
</comment>
<comment type="interaction">
    <interactant intactId="EBI-745290">
        <id>P17482</id>
    </interactant>
    <interactant intactId="EBI-14065470">
        <id>Q9BYR9</id>
        <label>KRTAP2-4</label>
    </interactant>
    <organismsDiffer>false</organismsDiffer>
    <experiments>3</experiments>
</comment>
<comment type="interaction">
    <interactant intactId="EBI-745290">
        <id>P17482</id>
    </interactant>
    <interactant intactId="EBI-9996449">
        <id>Q9BYR8</id>
        <label>KRTAP3-1</label>
    </interactant>
    <organismsDiffer>false</organismsDiffer>
    <experiments>3</experiments>
</comment>
<comment type="interaction">
    <interactant intactId="EBI-745290">
        <id>P17482</id>
    </interactant>
    <interactant intactId="EBI-751260">
        <id>Q9BYR7</id>
        <label>KRTAP3-2</label>
    </interactant>
    <organismsDiffer>false</organismsDiffer>
    <experiments>3</experiments>
</comment>
<comment type="interaction">
    <interactant intactId="EBI-745290">
        <id>P17482</id>
    </interactant>
    <interactant intactId="EBI-10172511">
        <id>Q9BYR5</id>
        <label>KRTAP4-2</label>
    </interactant>
    <organismsDiffer>false</organismsDiffer>
    <experiments>3</experiments>
</comment>
<comment type="interaction">
    <interactant intactId="EBI-745290">
        <id>P17482</id>
    </interactant>
    <interactant intactId="EBI-11987425">
        <id>Q6L8G8</id>
        <label>KRTAP5-7</label>
    </interactant>
    <organismsDiffer>false</organismsDiffer>
    <experiments>3</experiments>
</comment>
<comment type="interaction">
    <interactant intactId="EBI-745290">
        <id>P17482</id>
    </interactant>
    <interactant intactId="EBI-3958099">
        <id>P26371</id>
        <label>KRTAP5-9</label>
    </interactant>
    <organismsDiffer>false</organismsDiffer>
    <experiments>3</experiments>
</comment>
<comment type="interaction">
    <interactant intactId="EBI-745290">
        <id>P17482</id>
    </interactant>
    <interactant intactId="EBI-11962084">
        <id>Q3LI66</id>
        <label>KRTAP6-2</label>
    </interactant>
    <organismsDiffer>false</organismsDiffer>
    <experiments>3</experiments>
</comment>
<comment type="interaction">
    <interactant intactId="EBI-745290">
        <id>P17482</id>
    </interactant>
    <interactant intactId="EBI-22311199">
        <id>Q3LI67</id>
        <label>KRTAP6-3</label>
    </interactant>
    <organismsDiffer>false</organismsDiffer>
    <experiments>3</experiments>
</comment>
<comment type="interaction">
    <interactant intactId="EBI-745290">
        <id>P17482</id>
    </interactant>
    <interactant intactId="EBI-741037">
        <id>Q9BRK4</id>
        <label>LZTS2</label>
    </interactant>
    <organismsDiffer>false</organismsDiffer>
    <experiments>4</experiments>
</comment>
<comment type="interaction">
    <interactant intactId="EBI-745290">
        <id>P17482</id>
    </interactant>
    <interactant intactId="EBI-724076">
        <id>Q99750</id>
        <label>MDFI</label>
    </interactant>
    <organismsDiffer>false</organismsDiffer>
    <experiments>6</experiments>
</comment>
<comment type="interaction">
    <interactant intactId="EBI-745290">
        <id>P17482</id>
    </interactant>
    <interactant intactId="EBI-10172526">
        <id>Q9UJV3-2</id>
        <label>MID2</label>
    </interactant>
    <organismsDiffer>false</organismsDiffer>
    <experiments>6</experiments>
</comment>
<comment type="interaction">
    <interactant intactId="EBI-745290">
        <id>P17482</id>
    </interactant>
    <interactant intactId="EBI-11522433">
        <id>Q5JR59-3</id>
        <label>MTUS2</label>
    </interactant>
    <organismsDiffer>false</organismsDiffer>
    <experiments>3</experiments>
</comment>
<comment type="interaction">
    <interactant intactId="EBI-745290">
        <id>P17482</id>
    </interactant>
    <interactant intactId="EBI-22310682">
        <id>P0DPK4</id>
        <label>NOTCH2NLC</label>
    </interactant>
    <organismsDiffer>false</organismsDiffer>
    <experiments>3</experiments>
</comment>
<comment type="interaction">
    <interactant intactId="EBI-745290">
        <id>P17482</id>
    </interactant>
    <interactant intactId="EBI-536879">
        <id>O43482</id>
        <label>OIP5</label>
    </interactant>
    <organismsDiffer>false</organismsDiffer>
    <experiments>3</experiments>
</comment>
<comment type="interaction">
    <interactant intactId="EBI-745290">
        <id>P17482</id>
    </interactant>
    <interactant intactId="EBI-11956269">
        <id>Q92824-2</id>
        <label>PCSK5</label>
    </interactant>
    <organismsDiffer>false</organismsDiffer>
    <experiments>3</experiments>
</comment>
<comment type="interaction">
    <interactant intactId="EBI-745290">
        <id>P17482</id>
    </interactant>
    <interactant intactId="EBI-357275">
        <id>Q99471</id>
        <label>PFDN5</label>
    </interactant>
    <organismsDiffer>false</organismsDiffer>
    <experiments>3</experiments>
</comment>
<comment type="interaction">
    <interactant intactId="EBI-745290">
        <id>P17482</id>
    </interactant>
    <interactant intactId="EBI-949255">
        <id>Q58EX7</id>
        <label>PLEKHG4</label>
    </interactant>
    <organismsDiffer>false</organismsDiffer>
    <experiments>3</experiments>
</comment>
<comment type="interaction">
    <interactant intactId="EBI-745290">
        <id>P17482</id>
    </interactant>
    <interactant intactId="EBI-302345">
        <id>Q8ND90</id>
        <label>PNMA1</label>
    </interactant>
    <organismsDiffer>false</organismsDiffer>
    <experiments>6</experiments>
</comment>
<comment type="interaction">
    <interactant intactId="EBI-745290">
        <id>P17482</id>
    </interactant>
    <interactant intactId="EBI-1055079">
        <id>O15160</id>
        <label>POLR1C</label>
    </interactant>
    <organismsDiffer>false</organismsDiffer>
    <experiments>3</experiments>
</comment>
<comment type="interaction">
    <interactant intactId="EBI-745290">
        <id>P17482</id>
    </interactant>
    <interactant intactId="EBI-711613">
        <id>P21673</id>
        <label>SAT1</label>
    </interactant>
    <organismsDiffer>false</organismsDiffer>
    <experiments>6</experiments>
</comment>
<comment type="interaction">
    <interactant intactId="EBI-745290">
        <id>P17482</id>
    </interactant>
    <interactant intactId="EBI-747398">
        <id>Q9UHJ3</id>
        <label>SFMBT1</label>
    </interactant>
    <organismsDiffer>false</organismsDiffer>
    <experiments>3</experiments>
</comment>
<comment type="interaction">
    <interactant intactId="EBI-745290">
        <id>P17482</id>
    </interactant>
    <interactant intactId="EBI-12827077">
        <id>Q6N022</id>
        <label>TENM4</label>
    </interactant>
    <organismsDiffer>false</organismsDiffer>
    <experiments>3</experiments>
</comment>
<comment type="interaction">
    <interactant intactId="EBI-745290">
        <id>P17482</id>
    </interactant>
    <interactant intactId="EBI-949753">
        <id>Q63HR2</id>
        <label>TNS2</label>
    </interactant>
    <organismsDiffer>false</organismsDiffer>
    <experiments>3</experiments>
</comment>
<comment type="interaction">
    <interactant intactId="EBI-745290">
        <id>P17482</id>
    </interactant>
    <interactant intactId="EBI-719493">
        <id>P14373</id>
        <label>TRIM27</label>
    </interactant>
    <organismsDiffer>false</organismsDiffer>
    <experiments>3</experiments>
</comment>
<comment type="interaction">
    <interactant intactId="EBI-745290">
        <id>P17482</id>
    </interactant>
    <interactant intactId="EBI-742327">
        <id>Q15654</id>
        <label>TRIP6</label>
    </interactant>
    <organismsDiffer>false</organismsDiffer>
    <experiments>3</experiments>
</comment>
<comment type="subcellular location">
    <subcellularLocation>
        <location>Nucleus</location>
    </subcellularLocation>
</comment>
<comment type="developmental stage">
    <text>Expressed in whole embryos and fetuses at 5-9 weeks from conception.</text>
</comment>
<comment type="similarity">
    <text evidence="3">Belongs to the Abd-B homeobox family.</text>
</comment>
<organism>
    <name type="scientific">Homo sapiens</name>
    <name type="common">Human</name>
    <dbReference type="NCBI Taxonomy" id="9606"/>
    <lineage>
        <taxon>Eukaryota</taxon>
        <taxon>Metazoa</taxon>
        <taxon>Chordata</taxon>
        <taxon>Craniata</taxon>
        <taxon>Vertebrata</taxon>
        <taxon>Euteleostomi</taxon>
        <taxon>Mammalia</taxon>
        <taxon>Eutheria</taxon>
        <taxon>Euarchontoglires</taxon>
        <taxon>Primates</taxon>
        <taxon>Haplorrhini</taxon>
        <taxon>Catarrhini</taxon>
        <taxon>Hominidae</taxon>
        <taxon>Homo</taxon>
    </lineage>
</organism>